<evidence type="ECO:0000255" key="1"/>
<evidence type="ECO:0000269" key="2">
    <source>
    </source>
</evidence>
<evidence type="ECO:0000269" key="3">
    <source>
    </source>
</evidence>
<evidence type="ECO:0000303" key="4">
    <source>
    </source>
</evidence>
<evidence type="ECO:0000305" key="5"/>
<keyword id="KW-0131">Cell cycle</keyword>
<keyword id="KW-0132">Cell division</keyword>
<keyword id="KW-1003">Cell membrane</keyword>
<keyword id="KW-0325">Glycoprotein</keyword>
<keyword id="KW-0472">Membrane</keyword>
<keyword id="KW-1185">Reference proteome</keyword>
<keyword id="KW-0732">Signal</keyword>
<keyword id="KW-0812">Transmembrane</keyword>
<keyword id="KW-1133">Transmembrane helix</keyword>
<sequence length="1155" mass="128334">MAIYSSFWIRLYFTFRFFCYFLTSVVASDVSFLGDFSGFNVLSNSSANTDLSSQFFEQTNNGSLSSLIDTSYSNSQICYSSWQGDLYVIVLDSEQQTVLLQSNFTSNPTSLEIFSSQNTSFFGNISAIFCDDKFPYAYATFTFSDKPSFTSIYRWNVTNSNVTIEHFYNVKGNVDSLFFLNNDSVAISGNFTEISPFSSSNGPQIAKLAFRSNNSFSQNSLNRNLSSVSCDLTDSYSLWDPSSSGLVSIYAWAPYLIDFNRIRFYNYESSENSVAFFSAINPADGTVLPLTHYDLETGLSSTCDVNCSLQNFANYQDFYFSKGYNSYQIEIQMFGNGEATENSAFGLSSLQFFETNQNSYFDDSYNQESCGFPGLNSLSSYEGNFEASFSNASMPYWIQTIAGEQASVSFFPNITVPTNGTVQLLIPGCTYDNTCSQRGSVIANVYFAKNKQPATKLVQQASDFDQYVSLYSGYLQGFSDNFRPYVELLPYKNSRMVTHSIRFLEQSYTNVSNGLVFVNTTTDVNKLPSIIEFPAASKLRGTAISQIKSLSNGNFSLYMTGNFSDNYGNNVVYMDSLNHLHSFPNNGLNGWVSYIYVSGDSSYFGGNFTHTGDGSIKLNYIAMYSETSRNWSSLGLGTNGPVTHIGSTSLFIDGKIESFISFQGDFNEVYTSEGYAISTSGFSLWNPSSKSWVSMEKLGFYMSGYLFDIPGFNSTQRIYSGNLSAIASYSTRNIAHFSSDSLNDTFIPCYVNAFPSYIRLEDIAYPFANNSMIAILGSEEMEDKCTAAVYFANSTEPIYPKRILSANCSSKFIVLEDCLIIYSNDTDESDIVKNTFVSFNTTSNSLGNTTALSQLKGHINSVIVDDSYNNIFFGGNLSEQSSGCVGFCIFEYNSSSWRNISHNLISAEVQSILWVNETYSSMYLAGKFVWDTSDVDYLLMYNFDNNTIMSCKGSSSIPGPVLLASLKSQSKDEYSVLLYGTEVSSSDTYLNVLNSEGAINSYSLDIHLNQSTINSIDFFESNQISQIPINDSIIVLSGLIVLDDSSKASAVYCVNKSCLPLLTAFKDNGEAGIVRKVVQQKSFSSSASKMIPVTTKYDHIGQPRYVVIISLGISIGVMFLIMSGSIVVEIIHWFFSEHVETLHDYSNFLKELKTQ</sequence>
<name>RAX2_SCHPO</name>
<accession>O14239</accession>
<gene>
    <name evidence="4" type="primary">rax2</name>
    <name type="ORF">SPAC6F6.06c</name>
</gene>
<dbReference type="EMBL" id="CU329670">
    <property type="protein sequence ID" value="CAB11730.1"/>
    <property type="molecule type" value="Genomic_DNA"/>
</dbReference>
<dbReference type="PIR" id="T39040">
    <property type="entry name" value="T39040"/>
</dbReference>
<dbReference type="RefSeq" id="NP_593899.1">
    <property type="nucleotide sequence ID" value="NM_001019329.2"/>
</dbReference>
<dbReference type="BioGRID" id="279241">
    <property type="interactions" value="2"/>
</dbReference>
<dbReference type="FunCoup" id="O14239">
    <property type="interactions" value="9"/>
</dbReference>
<dbReference type="STRING" id="284812.O14239"/>
<dbReference type="GlyCosmos" id="O14239">
    <property type="glycosylation" value="38 sites, No reported glycans"/>
</dbReference>
<dbReference type="iPTMnet" id="O14239"/>
<dbReference type="SwissPalm" id="O14239"/>
<dbReference type="PaxDb" id="4896-SPAC6F6.06c.1"/>
<dbReference type="EnsemblFungi" id="SPAC6F6.06c.1">
    <property type="protein sequence ID" value="SPAC6F6.06c.1:pep"/>
    <property type="gene ID" value="SPAC6F6.06c"/>
</dbReference>
<dbReference type="GeneID" id="2542793"/>
<dbReference type="KEGG" id="spo:2542793"/>
<dbReference type="PomBase" id="SPAC6F6.06c">
    <property type="gene designation" value="rax2"/>
</dbReference>
<dbReference type="VEuPathDB" id="FungiDB:SPAC6F6.06c"/>
<dbReference type="eggNOG" id="ENOG502QQZD">
    <property type="taxonomic scope" value="Eukaryota"/>
</dbReference>
<dbReference type="HOGENOM" id="CLU_276484_0_0_1"/>
<dbReference type="InParanoid" id="O14239"/>
<dbReference type="OMA" id="NASMPYW"/>
<dbReference type="PhylomeDB" id="O14239"/>
<dbReference type="PRO" id="PR:O14239"/>
<dbReference type="Proteomes" id="UP000002485">
    <property type="component" value="Chromosome I"/>
</dbReference>
<dbReference type="GO" id="GO:0005783">
    <property type="term" value="C:endoplasmic reticulum"/>
    <property type="evidence" value="ECO:0007005"/>
    <property type="project" value="PomBase"/>
</dbReference>
<dbReference type="GO" id="GO:1902929">
    <property type="term" value="C:plasma membrane of growing cell tip"/>
    <property type="evidence" value="ECO:0000314"/>
    <property type="project" value="PomBase"/>
</dbReference>
<dbReference type="GO" id="GO:0061572">
    <property type="term" value="P:actin filament bundle organization"/>
    <property type="evidence" value="ECO:0000315"/>
    <property type="project" value="PomBase"/>
</dbReference>
<dbReference type="GO" id="GO:0051301">
    <property type="term" value="P:cell division"/>
    <property type="evidence" value="ECO:0007669"/>
    <property type="project" value="UniProtKB-KW"/>
</dbReference>
<dbReference type="GO" id="GO:0061245">
    <property type="term" value="P:establishment or maintenance of bipolar cell polarity"/>
    <property type="evidence" value="ECO:0000315"/>
    <property type="project" value="PomBase"/>
</dbReference>
<dbReference type="InterPro" id="IPR024982">
    <property type="entry name" value="Rax2-like_C"/>
</dbReference>
<dbReference type="InterPro" id="IPR048266">
    <property type="entry name" value="Rax2-like_second"/>
</dbReference>
<dbReference type="InterPro" id="IPR048265">
    <property type="entry name" value="Rax2-like_third"/>
</dbReference>
<dbReference type="PANTHER" id="PTHR31778">
    <property type="entry name" value="BUD SITE SELECTION PROTEIN RAX2"/>
    <property type="match status" value="1"/>
</dbReference>
<dbReference type="PANTHER" id="PTHR31778:SF2">
    <property type="entry name" value="BUD SITE SELECTION PROTEIN RAX2"/>
    <property type="match status" value="1"/>
</dbReference>
<dbReference type="Pfam" id="PF12768">
    <property type="entry name" value="Rax2"/>
    <property type="match status" value="1"/>
</dbReference>
<dbReference type="Pfam" id="PF20842">
    <property type="entry name" value="Rax2_2"/>
    <property type="match status" value="1"/>
</dbReference>
<dbReference type="Pfam" id="PF20843">
    <property type="entry name" value="Rax2_3"/>
    <property type="match status" value="1"/>
</dbReference>
<feature type="signal peptide" evidence="1">
    <location>
        <begin position="1"/>
        <end position="27"/>
    </location>
</feature>
<feature type="chain" id="PRO_0000290655" description="Polarized growth protein rax2">
    <location>
        <begin position="28"/>
        <end position="1155"/>
    </location>
</feature>
<feature type="topological domain" description="Extracellular" evidence="1">
    <location>
        <begin position="28"/>
        <end position="1105"/>
    </location>
</feature>
<feature type="transmembrane region" description="Helical" evidence="1">
    <location>
        <begin position="1106"/>
        <end position="1126"/>
    </location>
</feature>
<feature type="topological domain" description="Cytoplasmic" evidence="1">
    <location>
        <begin position="1127"/>
        <end position="1155"/>
    </location>
</feature>
<feature type="glycosylation site" description="N-linked (GlcNAc...) asparagine" evidence="1">
    <location>
        <position position="44"/>
    </location>
</feature>
<feature type="glycosylation site" description="N-linked (GlcNAc...) asparagine" evidence="1">
    <location>
        <position position="61"/>
    </location>
</feature>
<feature type="glycosylation site" description="N-linked (GlcNAc...) asparagine" evidence="1">
    <location>
        <position position="103"/>
    </location>
</feature>
<feature type="glycosylation site" description="N-linked (GlcNAc...) asparagine" evidence="1">
    <location>
        <position position="118"/>
    </location>
</feature>
<feature type="glycosylation site" description="N-linked (GlcNAc...) asparagine" evidence="1">
    <location>
        <position position="124"/>
    </location>
</feature>
<feature type="glycosylation site" description="N-linked (GlcNAc...) asparagine" evidence="1">
    <location>
        <position position="156"/>
    </location>
</feature>
<feature type="glycosylation site" description="N-linked (GlcNAc...) asparagine" evidence="1">
    <location>
        <position position="161"/>
    </location>
</feature>
<feature type="glycosylation site" description="N-linked (GlcNAc...) asparagine" evidence="1">
    <location>
        <position position="182"/>
    </location>
</feature>
<feature type="glycosylation site" description="N-linked (GlcNAc...) asparagine" evidence="1">
    <location>
        <position position="190"/>
    </location>
</feature>
<feature type="glycosylation site" description="N-linked (GlcNAc...) asparagine" evidence="1">
    <location>
        <position position="213"/>
    </location>
</feature>
<feature type="glycosylation site" description="N-linked (GlcNAc...) asparagine" evidence="1">
    <location>
        <position position="224"/>
    </location>
</feature>
<feature type="glycosylation site" description="N-linked (GlcNAc...) asparagine" evidence="1">
    <location>
        <position position="306"/>
    </location>
</feature>
<feature type="glycosylation site" description="N-linked (GlcNAc...) asparagine" evidence="1">
    <location>
        <position position="391"/>
    </location>
</feature>
<feature type="glycosylation site" description="N-linked (GlcNAc...) asparagine" evidence="1">
    <location>
        <position position="413"/>
    </location>
</feature>
<feature type="glycosylation site" description="N-linked (GlcNAc...) asparagine" evidence="1">
    <location>
        <position position="419"/>
    </location>
</feature>
<feature type="glycosylation site" description="N-linked (GlcNAc...) asparagine" evidence="1">
    <location>
        <position position="510"/>
    </location>
</feature>
<feature type="glycosylation site" description="N-linked (GlcNAc...) asparagine" evidence="1">
    <location>
        <position position="519"/>
    </location>
</feature>
<feature type="glycosylation site" description="N-linked (GlcNAc...) asparagine" evidence="1">
    <location>
        <position position="554"/>
    </location>
</feature>
<feature type="glycosylation site" description="N-linked (GlcNAc...) asparagine" evidence="1">
    <location>
        <position position="562"/>
    </location>
</feature>
<feature type="glycosylation site" description="N-linked (GlcNAc...) asparagine" evidence="1">
    <location>
        <position position="607"/>
    </location>
</feature>
<feature type="glycosylation site" description="N-linked (GlcNAc...) asparagine" evidence="1">
    <location>
        <position position="630"/>
    </location>
</feature>
<feature type="glycosylation site" description="N-linked (GlcNAc...) asparagine" evidence="1">
    <location>
        <position position="713"/>
    </location>
</feature>
<feature type="glycosylation site" description="N-linked (GlcNAc...) asparagine" evidence="1">
    <location>
        <position position="722"/>
    </location>
</feature>
<feature type="glycosylation site" description="N-linked (GlcNAc...) asparagine" evidence="1">
    <location>
        <position position="743"/>
    </location>
</feature>
<feature type="glycosylation site" description="N-linked (GlcNAc...) asparagine" evidence="1">
    <location>
        <position position="769"/>
    </location>
</feature>
<feature type="glycosylation site" description="N-linked (GlcNAc...) asparagine" evidence="1">
    <location>
        <position position="793"/>
    </location>
</feature>
<feature type="glycosylation site" description="N-linked (GlcNAc...) asparagine" evidence="1">
    <location>
        <position position="807"/>
    </location>
</feature>
<feature type="glycosylation site" description="N-linked (GlcNAc...) asparagine" evidence="1">
    <location>
        <position position="824"/>
    </location>
</feature>
<feature type="glycosylation site" description="N-linked (GlcNAc...) asparagine" evidence="1">
    <location>
        <position position="840"/>
    </location>
</feature>
<feature type="glycosylation site" description="N-linked (GlcNAc...) asparagine" evidence="1">
    <location>
        <position position="848"/>
    </location>
</feature>
<feature type="glycosylation site" description="N-linked (GlcNAc...) asparagine" evidence="1">
    <location>
        <position position="876"/>
    </location>
</feature>
<feature type="glycosylation site" description="N-linked (GlcNAc...) asparagine" evidence="1">
    <location>
        <position position="893"/>
    </location>
</feature>
<feature type="glycosylation site" description="N-linked (GlcNAc...) asparagine" evidence="1">
    <location>
        <position position="899"/>
    </location>
</feature>
<feature type="glycosylation site" description="N-linked (GlcNAc...) asparagine" evidence="1">
    <location>
        <position position="916"/>
    </location>
</feature>
<feature type="glycosylation site" description="N-linked (GlcNAc...) asparagine" evidence="1">
    <location>
        <position position="945"/>
    </location>
</feature>
<feature type="glycosylation site" description="N-linked (GlcNAc...) asparagine" evidence="1">
    <location>
        <position position="1009"/>
    </location>
</feature>
<feature type="glycosylation site" description="N-linked (GlcNAc...) asparagine" evidence="1">
    <location>
        <position position="1030"/>
    </location>
</feature>
<feature type="glycosylation site" description="N-linked (GlcNAc...) asparagine" evidence="1">
    <location>
        <position position="1055"/>
    </location>
</feature>
<protein>
    <recommendedName>
        <fullName evidence="4">Polarized growth protein rax2</fullName>
    </recommendedName>
    <alternativeName>
        <fullName evidence="4">Revert to axial protein 2</fullName>
    </alternativeName>
</protein>
<comment type="function">
    <text evidence="3">Controls cell polarity, through the G1 phase of mitosis, via regulation of for3 localization. Required for actin cable formation where it directs the spatial distribution of the actin cables.</text>
</comment>
<comment type="subunit">
    <text evidence="3">Interacts with for3 and tea1.</text>
</comment>
<comment type="subcellular location">
    <subcellularLocation>
        <location evidence="2 3">Cell membrane</location>
        <topology evidence="2 3">Single-pass type I membrane protein</topology>
    </subcellularLocation>
    <text>Localizes at the cell cortex of the 'old' growing cell tips.</text>
</comment>
<comment type="similarity">
    <text evidence="5">Belongs to the RAX2 family.</text>
</comment>
<reference key="1">
    <citation type="journal article" date="2002" name="Nature">
        <title>The genome sequence of Schizosaccharomyces pombe.</title>
        <authorList>
            <person name="Wood V."/>
            <person name="Gwilliam R."/>
            <person name="Rajandream M.A."/>
            <person name="Lyne M.H."/>
            <person name="Lyne R."/>
            <person name="Stewart A."/>
            <person name="Sgouros J.G."/>
            <person name="Peat N."/>
            <person name="Hayles J."/>
            <person name="Baker S.G."/>
            <person name="Basham D."/>
            <person name="Bowman S."/>
            <person name="Brooks K."/>
            <person name="Brown D."/>
            <person name="Brown S."/>
            <person name="Chillingworth T."/>
            <person name="Churcher C.M."/>
            <person name="Collins M."/>
            <person name="Connor R."/>
            <person name="Cronin A."/>
            <person name="Davis P."/>
            <person name="Feltwell T."/>
            <person name="Fraser A."/>
            <person name="Gentles S."/>
            <person name="Goble A."/>
            <person name="Hamlin N."/>
            <person name="Harris D.E."/>
            <person name="Hidalgo J."/>
            <person name="Hodgson G."/>
            <person name="Holroyd S."/>
            <person name="Hornsby T."/>
            <person name="Howarth S."/>
            <person name="Huckle E.J."/>
            <person name="Hunt S."/>
            <person name="Jagels K."/>
            <person name="James K.D."/>
            <person name="Jones L."/>
            <person name="Jones M."/>
            <person name="Leather S."/>
            <person name="McDonald S."/>
            <person name="McLean J."/>
            <person name="Mooney P."/>
            <person name="Moule S."/>
            <person name="Mungall K.L."/>
            <person name="Murphy L.D."/>
            <person name="Niblett D."/>
            <person name="Odell C."/>
            <person name="Oliver K."/>
            <person name="O'Neil S."/>
            <person name="Pearson D."/>
            <person name="Quail M.A."/>
            <person name="Rabbinowitsch E."/>
            <person name="Rutherford K.M."/>
            <person name="Rutter S."/>
            <person name="Saunders D."/>
            <person name="Seeger K."/>
            <person name="Sharp S."/>
            <person name="Skelton J."/>
            <person name="Simmonds M.N."/>
            <person name="Squares R."/>
            <person name="Squares S."/>
            <person name="Stevens K."/>
            <person name="Taylor K."/>
            <person name="Taylor R.G."/>
            <person name="Tivey A."/>
            <person name="Walsh S.V."/>
            <person name="Warren T."/>
            <person name="Whitehead S."/>
            <person name="Woodward J.R."/>
            <person name="Volckaert G."/>
            <person name="Aert R."/>
            <person name="Robben J."/>
            <person name="Grymonprez B."/>
            <person name="Weltjens I."/>
            <person name="Vanstreels E."/>
            <person name="Rieger M."/>
            <person name="Schaefer M."/>
            <person name="Mueller-Auer S."/>
            <person name="Gabel C."/>
            <person name="Fuchs M."/>
            <person name="Duesterhoeft A."/>
            <person name="Fritzc C."/>
            <person name="Holzer E."/>
            <person name="Moestl D."/>
            <person name="Hilbert H."/>
            <person name="Borzym K."/>
            <person name="Langer I."/>
            <person name="Beck A."/>
            <person name="Lehrach H."/>
            <person name="Reinhardt R."/>
            <person name="Pohl T.M."/>
            <person name="Eger P."/>
            <person name="Zimmermann W."/>
            <person name="Wedler H."/>
            <person name="Wambutt R."/>
            <person name="Purnelle B."/>
            <person name="Goffeau A."/>
            <person name="Cadieu E."/>
            <person name="Dreano S."/>
            <person name="Gloux S."/>
            <person name="Lelaure V."/>
            <person name="Mottier S."/>
            <person name="Galibert F."/>
            <person name="Aves S.J."/>
            <person name="Xiang Z."/>
            <person name="Hunt C."/>
            <person name="Moore K."/>
            <person name="Hurst S.M."/>
            <person name="Lucas M."/>
            <person name="Rochet M."/>
            <person name="Gaillardin C."/>
            <person name="Tallada V.A."/>
            <person name="Garzon A."/>
            <person name="Thode G."/>
            <person name="Daga R.R."/>
            <person name="Cruzado L."/>
            <person name="Jimenez J."/>
            <person name="Sanchez M."/>
            <person name="del Rey F."/>
            <person name="Benito J."/>
            <person name="Dominguez A."/>
            <person name="Revuelta J.L."/>
            <person name="Moreno S."/>
            <person name="Armstrong J."/>
            <person name="Forsburg S.L."/>
            <person name="Cerutti L."/>
            <person name="Lowe T."/>
            <person name="McCombie W.R."/>
            <person name="Paulsen I."/>
            <person name="Potashkin J."/>
            <person name="Shpakovski G.V."/>
            <person name="Ussery D."/>
            <person name="Barrell B.G."/>
            <person name="Nurse P."/>
        </authorList>
    </citation>
    <scope>NUCLEOTIDE SEQUENCE [LARGE SCALE GENOMIC DNA]</scope>
    <source>
        <strain>972 / ATCC 24843</strain>
    </source>
</reference>
<reference key="2">
    <citation type="journal article" date="2006" name="Mol. Cells">
        <title>Function of rax2p in the polarized growth of fission yeast.</title>
        <authorList>
            <person name="Choi E."/>
            <person name="Lee K."/>
            <person name="Song K."/>
        </authorList>
    </citation>
    <scope>FUNCTION</scope>
    <scope>INTERACTION WITH FOR3 AND TEA1</scope>
    <scope>SUBCELLULAR LOCATION</scope>
</reference>
<reference key="3">
    <citation type="journal article" date="2006" name="Nat. Biotechnol.">
        <title>ORFeome cloning and global analysis of protein localization in the fission yeast Schizosaccharomyces pombe.</title>
        <authorList>
            <person name="Matsuyama A."/>
            <person name="Arai R."/>
            <person name="Yashiroda Y."/>
            <person name="Shirai A."/>
            <person name="Kamata A."/>
            <person name="Sekido S."/>
            <person name="Kobayashi Y."/>
            <person name="Hashimoto A."/>
            <person name="Hamamoto M."/>
            <person name="Hiraoka Y."/>
            <person name="Horinouchi S."/>
            <person name="Yoshida M."/>
        </authorList>
    </citation>
    <scope>SUBCELLULAR LOCATION [LARGE SCALE ANALYSIS]</scope>
</reference>
<proteinExistence type="evidence at protein level"/>
<organism>
    <name type="scientific">Schizosaccharomyces pombe (strain 972 / ATCC 24843)</name>
    <name type="common">Fission yeast</name>
    <dbReference type="NCBI Taxonomy" id="284812"/>
    <lineage>
        <taxon>Eukaryota</taxon>
        <taxon>Fungi</taxon>
        <taxon>Dikarya</taxon>
        <taxon>Ascomycota</taxon>
        <taxon>Taphrinomycotina</taxon>
        <taxon>Schizosaccharomycetes</taxon>
        <taxon>Schizosaccharomycetales</taxon>
        <taxon>Schizosaccharomycetaceae</taxon>
        <taxon>Schizosaccharomyces</taxon>
    </lineage>
</organism>